<protein>
    <recommendedName>
        <fullName evidence="1">DNA-directed RNA polymerase subunit alpha</fullName>
        <shortName evidence="1">RNAP subunit alpha</shortName>
        <ecNumber evidence="1">2.7.7.6</ecNumber>
    </recommendedName>
    <alternativeName>
        <fullName evidence="1">RNA polymerase subunit alpha</fullName>
    </alternativeName>
    <alternativeName>
        <fullName evidence="1">Transcriptase subunit alpha</fullName>
    </alternativeName>
</protein>
<sequence>MIFDEDSNSIAQDSGYMAVGNAYSNGVSYISMSDHWSKLTKPSSIKVVPSGASPNKADLIIEPLESGFALTLGNALRRVMMSSLRGFAVYGVEIENVLHEFTSISGVREDVTDILLNISMMRVKLSGMNSKVLSLKVKGPCEVRSGMIPDTDDCIILNKDLLICTLDQGVDFNIKMYVNAGKGYVPAVKRKSVNKLGDIPINFIATNALYSPIKKASFKVESSRIGQFTDYDRLIMSVETDGSILPDEAVALAARILQDQFQPFINFDETDEPHKKVDAKDTLPYDSNLLRKVDELELSVRSYNCLKNDNITYIGDLVQKTESDMLRTPNFGRKSLNEINELLASMNLHLGMKIANWPPESIESLSKQYSEE</sequence>
<gene>
    <name evidence="1" type="primary">rpoA</name>
    <name type="ordered locus">ECH_0432</name>
</gene>
<comment type="function">
    <text evidence="1">DNA-dependent RNA polymerase catalyzes the transcription of DNA into RNA using the four ribonucleoside triphosphates as substrates.</text>
</comment>
<comment type="catalytic activity">
    <reaction evidence="1">
        <text>RNA(n) + a ribonucleoside 5'-triphosphate = RNA(n+1) + diphosphate</text>
        <dbReference type="Rhea" id="RHEA:21248"/>
        <dbReference type="Rhea" id="RHEA-COMP:14527"/>
        <dbReference type="Rhea" id="RHEA-COMP:17342"/>
        <dbReference type="ChEBI" id="CHEBI:33019"/>
        <dbReference type="ChEBI" id="CHEBI:61557"/>
        <dbReference type="ChEBI" id="CHEBI:140395"/>
        <dbReference type="EC" id="2.7.7.6"/>
    </reaction>
</comment>
<comment type="subunit">
    <text evidence="1">Homodimer. The RNAP catalytic core consists of 2 alpha, 1 beta, 1 beta' and 1 omega subunit. When a sigma factor is associated with the core the holoenzyme is formed, which can initiate transcription.</text>
</comment>
<comment type="domain">
    <text evidence="1">The N-terminal domain is essential for RNAP assembly and basal transcription, whereas the C-terminal domain is involved in interaction with transcriptional regulators and with upstream promoter elements.</text>
</comment>
<comment type="similarity">
    <text evidence="1">Belongs to the RNA polymerase alpha chain family.</text>
</comment>
<comment type="sequence caution" evidence="2">
    <conflict type="erroneous initiation">
        <sequence resource="EMBL-CDS" id="ABD45224"/>
    </conflict>
</comment>
<organism>
    <name type="scientific">Ehrlichia chaffeensis (strain ATCC CRL-10679 / Arkansas)</name>
    <dbReference type="NCBI Taxonomy" id="205920"/>
    <lineage>
        <taxon>Bacteria</taxon>
        <taxon>Pseudomonadati</taxon>
        <taxon>Pseudomonadota</taxon>
        <taxon>Alphaproteobacteria</taxon>
        <taxon>Rickettsiales</taxon>
        <taxon>Anaplasmataceae</taxon>
        <taxon>Ehrlichia</taxon>
    </lineage>
</organism>
<proteinExistence type="inferred from homology"/>
<accession>Q2GH33</accession>
<dbReference type="EC" id="2.7.7.6" evidence="1"/>
<dbReference type="EMBL" id="CP000236">
    <property type="protein sequence ID" value="ABD45224.1"/>
    <property type="status" value="ALT_INIT"/>
    <property type="molecule type" value="Genomic_DNA"/>
</dbReference>
<dbReference type="SMR" id="Q2GH33"/>
<dbReference type="STRING" id="205920.ECH_0432"/>
<dbReference type="KEGG" id="ech:ECH_0432"/>
<dbReference type="eggNOG" id="COG0202">
    <property type="taxonomic scope" value="Bacteria"/>
</dbReference>
<dbReference type="HOGENOM" id="CLU_053084_0_0_5"/>
<dbReference type="OrthoDB" id="9805706at2"/>
<dbReference type="Proteomes" id="UP000008320">
    <property type="component" value="Chromosome"/>
</dbReference>
<dbReference type="GO" id="GO:0005737">
    <property type="term" value="C:cytoplasm"/>
    <property type="evidence" value="ECO:0007669"/>
    <property type="project" value="UniProtKB-ARBA"/>
</dbReference>
<dbReference type="GO" id="GO:0000428">
    <property type="term" value="C:DNA-directed RNA polymerase complex"/>
    <property type="evidence" value="ECO:0007669"/>
    <property type="project" value="UniProtKB-KW"/>
</dbReference>
<dbReference type="GO" id="GO:0003677">
    <property type="term" value="F:DNA binding"/>
    <property type="evidence" value="ECO:0007669"/>
    <property type="project" value="UniProtKB-UniRule"/>
</dbReference>
<dbReference type="GO" id="GO:0003899">
    <property type="term" value="F:DNA-directed RNA polymerase activity"/>
    <property type="evidence" value="ECO:0007669"/>
    <property type="project" value="UniProtKB-UniRule"/>
</dbReference>
<dbReference type="GO" id="GO:0046983">
    <property type="term" value="F:protein dimerization activity"/>
    <property type="evidence" value="ECO:0007669"/>
    <property type="project" value="InterPro"/>
</dbReference>
<dbReference type="GO" id="GO:0006351">
    <property type="term" value="P:DNA-templated transcription"/>
    <property type="evidence" value="ECO:0007669"/>
    <property type="project" value="UniProtKB-UniRule"/>
</dbReference>
<dbReference type="CDD" id="cd06928">
    <property type="entry name" value="RNAP_alpha_NTD"/>
    <property type="match status" value="1"/>
</dbReference>
<dbReference type="FunFam" id="1.10.150.20:FF:000001">
    <property type="entry name" value="DNA-directed RNA polymerase subunit alpha"/>
    <property type="match status" value="1"/>
</dbReference>
<dbReference type="FunFam" id="2.170.120.12:FF:000001">
    <property type="entry name" value="DNA-directed RNA polymerase subunit alpha"/>
    <property type="match status" value="1"/>
</dbReference>
<dbReference type="Gene3D" id="1.10.150.20">
    <property type="entry name" value="5' to 3' exonuclease, C-terminal subdomain"/>
    <property type="match status" value="1"/>
</dbReference>
<dbReference type="Gene3D" id="2.170.120.12">
    <property type="entry name" value="DNA-directed RNA polymerase, insert domain"/>
    <property type="match status" value="1"/>
</dbReference>
<dbReference type="Gene3D" id="3.30.1360.10">
    <property type="entry name" value="RNA polymerase, RBP11-like subunit"/>
    <property type="match status" value="1"/>
</dbReference>
<dbReference type="HAMAP" id="MF_00059">
    <property type="entry name" value="RNApol_bact_RpoA"/>
    <property type="match status" value="1"/>
</dbReference>
<dbReference type="InterPro" id="IPR011262">
    <property type="entry name" value="DNA-dir_RNA_pol_insert"/>
</dbReference>
<dbReference type="InterPro" id="IPR011263">
    <property type="entry name" value="DNA-dir_RNA_pol_RpoA/D/Rpb3"/>
</dbReference>
<dbReference type="InterPro" id="IPR011773">
    <property type="entry name" value="DNA-dir_RpoA"/>
</dbReference>
<dbReference type="InterPro" id="IPR036603">
    <property type="entry name" value="RBP11-like"/>
</dbReference>
<dbReference type="InterPro" id="IPR011260">
    <property type="entry name" value="RNAP_asu_C"/>
</dbReference>
<dbReference type="InterPro" id="IPR036643">
    <property type="entry name" value="RNApol_insert_sf"/>
</dbReference>
<dbReference type="NCBIfam" id="NF003513">
    <property type="entry name" value="PRK05182.1-2"/>
    <property type="match status" value="1"/>
</dbReference>
<dbReference type="NCBIfam" id="NF003519">
    <property type="entry name" value="PRK05182.2-5"/>
    <property type="match status" value="1"/>
</dbReference>
<dbReference type="NCBIfam" id="TIGR02027">
    <property type="entry name" value="rpoA"/>
    <property type="match status" value="1"/>
</dbReference>
<dbReference type="Pfam" id="PF01000">
    <property type="entry name" value="RNA_pol_A_bac"/>
    <property type="match status" value="1"/>
</dbReference>
<dbReference type="Pfam" id="PF03118">
    <property type="entry name" value="RNA_pol_A_CTD"/>
    <property type="match status" value="1"/>
</dbReference>
<dbReference type="Pfam" id="PF01193">
    <property type="entry name" value="RNA_pol_L"/>
    <property type="match status" value="1"/>
</dbReference>
<dbReference type="SMART" id="SM00662">
    <property type="entry name" value="RPOLD"/>
    <property type="match status" value="1"/>
</dbReference>
<dbReference type="SUPFAM" id="SSF47789">
    <property type="entry name" value="C-terminal domain of RNA polymerase alpha subunit"/>
    <property type="match status" value="1"/>
</dbReference>
<dbReference type="SUPFAM" id="SSF56553">
    <property type="entry name" value="Insert subdomain of RNA polymerase alpha subunit"/>
    <property type="match status" value="1"/>
</dbReference>
<dbReference type="SUPFAM" id="SSF55257">
    <property type="entry name" value="RBP11-like subunits of RNA polymerase"/>
    <property type="match status" value="1"/>
</dbReference>
<reference key="1">
    <citation type="journal article" date="2006" name="PLoS Genet.">
        <title>Comparative genomics of emerging human ehrlichiosis agents.</title>
        <authorList>
            <person name="Dunning Hotopp J.C."/>
            <person name="Lin M."/>
            <person name="Madupu R."/>
            <person name="Crabtree J."/>
            <person name="Angiuoli S.V."/>
            <person name="Eisen J.A."/>
            <person name="Seshadri R."/>
            <person name="Ren Q."/>
            <person name="Wu M."/>
            <person name="Utterback T.R."/>
            <person name="Smith S."/>
            <person name="Lewis M."/>
            <person name="Khouri H."/>
            <person name="Zhang C."/>
            <person name="Niu H."/>
            <person name="Lin Q."/>
            <person name="Ohashi N."/>
            <person name="Zhi N."/>
            <person name="Nelson W.C."/>
            <person name="Brinkac L.M."/>
            <person name="Dodson R.J."/>
            <person name="Rosovitz M.J."/>
            <person name="Sundaram J.P."/>
            <person name="Daugherty S.C."/>
            <person name="Davidsen T."/>
            <person name="Durkin A.S."/>
            <person name="Gwinn M.L."/>
            <person name="Haft D.H."/>
            <person name="Selengut J.D."/>
            <person name="Sullivan S.A."/>
            <person name="Zafar N."/>
            <person name="Zhou L."/>
            <person name="Benahmed F."/>
            <person name="Forberger H."/>
            <person name="Halpin R."/>
            <person name="Mulligan S."/>
            <person name="Robinson J."/>
            <person name="White O."/>
            <person name="Rikihisa Y."/>
            <person name="Tettelin H."/>
        </authorList>
    </citation>
    <scope>NUCLEOTIDE SEQUENCE [LARGE SCALE GENOMIC DNA]</scope>
    <source>
        <strain>ATCC CRL-10679 / Arkansas</strain>
    </source>
</reference>
<name>RPOA_EHRCR</name>
<evidence type="ECO:0000255" key="1">
    <source>
        <dbReference type="HAMAP-Rule" id="MF_00059"/>
    </source>
</evidence>
<evidence type="ECO:0000305" key="2"/>
<feature type="chain" id="PRO_0000264498" description="DNA-directed RNA polymerase subunit alpha">
    <location>
        <begin position="1"/>
        <end position="372"/>
    </location>
</feature>
<feature type="region of interest" description="Alpha N-terminal domain (alpha-NTD)" evidence="1">
    <location>
        <begin position="1"/>
        <end position="268"/>
    </location>
</feature>
<feature type="region of interest" description="Alpha C-terminal domain (alpha-CTD)" evidence="1">
    <location>
        <begin position="280"/>
        <end position="372"/>
    </location>
</feature>
<keyword id="KW-0240">DNA-directed RNA polymerase</keyword>
<keyword id="KW-0548">Nucleotidyltransferase</keyword>
<keyword id="KW-1185">Reference proteome</keyword>
<keyword id="KW-0804">Transcription</keyword>
<keyword id="KW-0808">Transferase</keyword>